<keyword id="KW-0067">ATP-binding</keyword>
<keyword id="KW-0143">Chaperone</keyword>
<keyword id="KW-0175">Coiled coil</keyword>
<keyword id="KW-0963">Cytoplasm</keyword>
<keyword id="KW-0547">Nucleotide-binding</keyword>
<keyword id="KW-0647">Proteasome</keyword>
<keyword id="KW-1185">Reference proteome</keyword>
<name>PAN_METMP</name>
<dbReference type="EMBL" id="BX950229">
    <property type="protein sequence ID" value="CAF31203.1"/>
    <property type="molecule type" value="Genomic_DNA"/>
</dbReference>
<dbReference type="RefSeq" id="WP_011171591.1">
    <property type="nucleotide sequence ID" value="NC_005791.1"/>
</dbReference>
<dbReference type="SMR" id="Q6LWR0"/>
<dbReference type="STRING" id="267377.MMP1647"/>
<dbReference type="EnsemblBacteria" id="CAF31203">
    <property type="protein sequence ID" value="CAF31203"/>
    <property type="gene ID" value="MMP1647"/>
</dbReference>
<dbReference type="KEGG" id="mmp:MMP1647"/>
<dbReference type="PATRIC" id="fig|267377.15.peg.1686"/>
<dbReference type="eggNOG" id="arCOG01306">
    <property type="taxonomic scope" value="Archaea"/>
</dbReference>
<dbReference type="HOGENOM" id="CLU_000688_2_0_2"/>
<dbReference type="OrthoDB" id="77269at2157"/>
<dbReference type="Proteomes" id="UP000000590">
    <property type="component" value="Chromosome"/>
</dbReference>
<dbReference type="GO" id="GO:0005737">
    <property type="term" value="C:cytoplasm"/>
    <property type="evidence" value="ECO:0007669"/>
    <property type="project" value="UniProtKB-SubCell"/>
</dbReference>
<dbReference type="GO" id="GO:0022623">
    <property type="term" value="C:proteasome-activating nucleotidase complex"/>
    <property type="evidence" value="ECO:0007669"/>
    <property type="project" value="UniProtKB-UniRule"/>
</dbReference>
<dbReference type="GO" id="GO:0005524">
    <property type="term" value="F:ATP binding"/>
    <property type="evidence" value="ECO:0007669"/>
    <property type="project" value="UniProtKB-UniRule"/>
</dbReference>
<dbReference type="GO" id="GO:0016887">
    <property type="term" value="F:ATP hydrolysis activity"/>
    <property type="evidence" value="ECO:0007669"/>
    <property type="project" value="UniProtKB-UniRule"/>
</dbReference>
<dbReference type="GO" id="GO:0010498">
    <property type="term" value="P:proteasomal protein catabolic process"/>
    <property type="evidence" value="ECO:0007669"/>
    <property type="project" value="UniProtKB-UniRule"/>
</dbReference>
<dbReference type="GO" id="GO:0043335">
    <property type="term" value="P:protein unfolding"/>
    <property type="evidence" value="ECO:0007669"/>
    <property type="project" value="UniProtKB-UniRule"/>
</dbReference>
<dbReference type="CDD" id="cd19502">
    <property type="entry name" value="RecA-like_PAN_like"/>
    <property type="match status" value="1"/>
</dbReference>
<dbReference type="FunFam" id="3.40.50.300:FF:000033">
    <property type="entry name" value="26S protease regulatory subunit 6B"/>
    <property type="match status" value="1"/>
</dbReference>
<dbReference type="FunFam" id="1.10.8.60:FF:000006">
    <property type="entry name" value="26S protease regulatory subunit 8"/>
    <property type="match status" value="1"/>
</dbReference>
<dbReference type="Gene3D" id="1.10.8.60">
    <property type="match status" value="1"/>
</dbReference>
<dbReference type="Gene3D" id="2.40.50.140">
    <property type="entry name" value="Nucleic acid-binding proteins"/>
    <property type="match status" value="1"/>
</dbReference>
<dbReference type="Gene3D" id="3.40.50.300">
    <property type="entry name" value="P-loop containing nucleotide triphosphate hydrolases"/>
    <property type="match status" value="1"/>
</dbReference>
<dbReference type="HAMAP" id="MF_00553">
    <property type="entry name" value="PAN"/>
    <property type="match status" value="1"/>
</dbReference>
<dbReference type="InterPro" id="IPR050221">
    <property type="entry name" value="26S_Proteasome_ATPase"/>
</dbReference>
<dbReference type="InterPro" id="IPR003593">
    <property type="entry name" value="AAA+_ATPase"/>
</dbReference>
<dbReference type="InterPro" id="IPR041569">
    <property type="entry name" value="AAA_lid_3"/>
</dbReference>
<dbReference type="InterPro" id="IPR003959">
    <property type="entry name" value="ATPase_AAA_core"/>
</dbReference>
<dbReference type="InterPro" id="IPR003960">
    <property type="entry name" value="ATPase_AAA_CS"/>
</dbReference>
<dbReference type="InterPro" id="IPR012340">
    <property type="entry name" value="NA-bd_OB-fold"/>
</dbReference>
<dbReference type="InterPro" id="IPR023501">
    <property type="entry name" value="Nucleotidase_PAN"/>
</dbReference>
<dbReference type="InterPro" id="IPR027417">
    <property type="entry name" value="P-loop_NTPase"/>
</dbReference>
<dbReference type="InterPro" id="IPR032501">
    <property type="entry name" value="Prot_ATP_ID_OB_2nd"/>
</dbReference>
<dbReference type="NCBIfam" id="NF003069">
    <property type="entry name" value="PRK03992.1"/>
    <property type="match status" value="1"/>
</dbReference>
<dbReference type="NCBIfam" id="TIGR01242">
    <property type="entry name" value="proteasome-activating nucleotidase"/>
    <property type="match status" value="1"/>
</dbReference>
<dbReference type="PANTHER" id="PTHR23073">
    <property type="entry name" value="26S PROTEASOME REGULATORY SUBUNIT"/>
    <property type="match status" value="1"/>
</dbReference>
<dbReference type="Pfam" id="PF00004">
    <property type="entry name" value="AAA"/>
    <property type="match status" value="1"/>
</dbReference>
<dbReference type="Pfam" id="PF17862">
    <property type="entry name" value="AAA_lid_3"/>
    <property type="match status" value="1"/>
</dbReference>
<dbReference type="Pfam" id="PF16450">
    <property type="entry name" value="Prot_ATP_ID_OB_C"/>
    <property type="match status" value="1"/>
</dbReference>
<dbReference type="SMART" id="SM00382">
    <property type="entry name" value="AAA"/>
    <property type="match status" value="1"/>
</dbReference>
<dbReference type="SUPFAM" id="SSF52540">
    <property type="entry name" value="P-loop containing nucleoside triphosphate hydrolases"/>
    <property type="match status" value="1"/>
</dbReference>
<dbReference type="PROSITE" id="PS00674">
    <property type="entry name" value="AAA"/>
    <property type="match status" value="1"/>
</dbReference>
<comment type="function">
    <text evidence="1">ATPase which is responsible for recognizing, binding, unfolding and translocation of substrate proteins into the archaeal 20S proteasome core particle. Is essential for opening the gate of the 20S proteasome via an interaction with its C-terminus, thereby allowing substrate entry and access to the site of proteolysis. Thus, the C-termini of the proteasomal ATPase function like a 'key in a lock' to induce gate opening and therefore regulate proteolysis. Unfolding activity requires energy from ATP hydrolysis, whereas ATP binding alone promotes ATPase-20S proteasome association which triggers gate opening, and supports translocation of unfolded substrates.</text>
</comment>
<comment type="subunit">
    <text evidence="1">Homohexamer. The hexameric complex has a two-ring architecture resembling a top hat that caps the 20S proteasome core at one or both ends. Upon ATP-binding, the C-terminus of PAN interacts with the alpha-rings of the proteasome core by binding to the intersubunit pockets.</text>
</comment>
<comment type="subcellular location">
    <subcellularLocation>
        <location evidence="1">Cytoplasm</location>
    </subcellularLocation>
</comment>
<comment type="domain">
    <text evidence="1">Consists of three main regions, an N-terminal coiled-coil domain that may assist in substrate recognition, an interdomain involved in PAN hexamerization, and a C-terminal ATPase domain of the AAA type.</text>
</comment>
<comment type="similarity">
    <text evidence="1">Belongs to the AAA ATPase family.</text>
</comment>
<gene>
    <name evidence="1" type="primary">pan</name>
    <name type="ordered locus">MMP1647</name>
</gene>
<reference key="1">
    <citation type="journal article" date="2004" name="J. Bacteriol.">
        <title>Complete genome sequence of the genetically tractable hydrogenotrophic methanogen Methanococcus maripaludis.</title>
        <authorList>
            <person name="Hendrickson E.L."/>
            <person name="Kaul R."/>
            <person name="Zhou Y."/>
            <person name="Bovee D."/>
            <person name="Chapman P."/>
            <person name="Chung J."/>
            <person name="Conway de Macario E."/>
            <person name="Dodsworth J.A."/>
            <person name="Gillett W."/>
            <person name="Graham D.E."/>
            <person name="Hackett M."/>
            <person name="Haydock A.K."/>
            <person name="Kang A."/>
            <person name="Land M.L."/>
            <person name="Levy R."/>
            <person name="Lie T.J."/>
            <person name="Major T.A."/>
            <person name="Moore B.C."/>
            <person name="Porat I."/>
            <person name="Palmeiri A."/>
            <person name="Rouse G."/>
            <person name="Saenphimmachak C."/>
            <person name="Soell D."/>
            <person name="Van Dien S."/>
            <person name="Wang T."/>
            <person name="Whitman W.B."/>
            <person name="Xia Q."/>
            <person name="Zhang Y."/>
            <person name="Larimer F.W."/>
            <person name="Olson M.V."/>
            <person name="Leigh J.A."/>
        </authorList>
    </citation>
    <scope>NUCLEOTIDE SEQUENCE [LARGE SCALE GENOMIC DNA]</scope>
    <source>
        <strain>DSM 14266 / JCM 13030 / NBRC 101832 / S2 / LL</strain>
    </source>
</reference>
<evidence type="ECO:0000255" key="1">
    <source>
        <dbReference type="HAMAP-Rule" id="MF_00553"/>
    </source>
</evidence>
<protein>
    <recommendedName>
        <fullName evidence="1">Proteasome-activating nucleotidase</fullName>
        <shortName evidence="1">PAN</shortName>
    </recommendedName>
    <alternativeName>
        <fullName evidence="1">Proteasomal ATPase</fullName>
    </alternativeName>
    <alternativeName>
        <fullName evidence="1">Proteasome regulatory ATPase</fullName>
    </alternativeName>
    <alternativeName>
        <fullName evidence="1">Proteasome regulatory particle</fullName>
    </alternativeName>
</protein>
<accession>Q6LWR0</accession>
<proteinExistence type="inferred from homology"/>
<feature type="chain" id="PRO_0000084746" description="Proteasome-activating nucleotidase">
    <location>
        <begin position="1"/>
        <end position="407"/>
    </location>
</feature>
<feature type="region of interest" description="Docks into pockets in the proteasome alpha-ring to cause gate opening" evidence="1">
    <location>
        <begin position="405"/>
        <end position="407"/>
    </location>
</feature>
<feature type="coiled-coil region" evidence="1">
    <location>
        <begin position="22"/>
        <end position="67"/>
    </location>
</feature>
<feature type="binding site" evidence="1">
    <location>
        <begin position="192"/>
        <end position="197"/>
    </location>
    <ligand>
        <name>ATP</name>
        <dbReference type="ChEBI" id="CHEBI:30616"/>
    </ligand>
</feature>
<feature type="binding site" evidence="1">
    <location>
        <position position="331"/>
    </location>
    <ligand>
        <name>ATP</name>
        <dbReference type="ChEBI" id="CHEBI:30616"/>
    </ligand>
</feature>
<sequence>MSYPDDYSTDIEKNKMDLKEFKEKTQIAELESKVLRLELKNKDINRENVQIKKENEILKRELDKLRIPPLILGTILDKVNERKAVVKSSTGPNFLVNLSQFVDPEDIVPGARVCLNQQTLAIVEVLPKEKDYRAMAMEIEEKPDISFEDIGGLNNQIRDIKEVVELPLKNPELFEKVGIVPPKGVLLYGPPGTGKTLLAKAVAYETNASFVRVVGSELVKKFIGEGAKLVRDVFKLAKEKSPCIIFIDEIDAVASKRTESLTGGDREVQRTLMQLLAEMDGFDSRGDVKIIAATNRPDILDPAILRPGRFDRIIEISMPDEDGRLEILKIHTEKMNLKGVDLREVAKIAENMVGADLKAVCTEAGMFAIREEREFIKMDDFREAISKITGKKEKCSYDMPQLTVMYG</sequence>
<organism>
    <name type="scientific">Methanococcus maripaludis (strain DSM 14266 / JCM 13030 / NBRC 101832 / S2 / LL)</name>
    <dbReference type="NCBI Taxonomy" id="267377"/>
    <lineage>
        <taxon>Archaea</taxon>
        <taxon>Methanobacteriati</taxon>
        <taxon>Methanobacteriota</taxon>
        <taxon>Methanomada group</taxon>
        <taxon>Methanococci</taxon>
        <taxon>Methanococcales</taxon>
        <taxon>Methanococcaceae</taxon>
        <taxon>Methanococcus</taxon>
    </lineage>
</organism>